<accession>P34271</accession>
<accession>Q6IZD3</accession>
<proteinExistence type="evidence at protein level"/>
<name>CUP4_CAEEL</name>
<comment type="function">
    <text evidence="3 4">Thought to regulate endocytosis in coelomocytes through modulation of phospholipase C activity. Possible acetylcholine receptor.</text>
</comment>
<comment type="subcellular location">
    <subcellularLocation>
        <location evidence="4">Cytoplasmic vesicle membrane</location>
        <topology evidence="4">Multi-pass membrane protein</topology>
    </subcellularLocation>
</comment>
<comment type="tissue specificity">
    <text evidence="4">Expressed in coelomocytes.</text>
</comment>
<comment type="disruption phenotype">
    <text evidence="3">Worms display a lack of uptake of GFP from the pseudocoelom into coelomocytes, suggesting a decrease or absence of endocytosis in coelomocytes. Mutants also display a slightly dumpy appearance with a low penetrance defect in distal tip cell leader function, indicating defects in coelomocyte function.</text>
</comment>
<comment type="similarity">
    <text evidence="5">Belongs to the ligand-gated ion channel (TC 1.A.9) family. Acetylcholine receptor (TC 1.A.9.1) subfamily.</text>
</comment>
<evidence type="ECO:0000250" key="1"/>
<evidence type="ECO:0000255" key="2"/>
<evidence type="ECO:0000269" key="3">
    <source>
    </source>
</evidence>
<evidence type="ECO:0000269" key="4">
    <source>
    </source>
</evidence>
<evidence type="ECO:0000305" key="5"/>
<gene>
    <name type="primary">cup-4</name>
    <name type="ORF">C02C2.3</name>
</gene>
<protein>
    <recommendedName>
        <fullName>Acetylcholine receptor-like protein cup-4</fullName>
    </recommendedName>
    <alternativeName>
        <fullName>Coelomocyte uptake defective protein 4</fullName>
    </alternativeName>
</protein>
<keyword id="KW-0968">Cytoplasmic vesicle</keyword>
<keyword id="KW-1015">Disulfide bond</keyword>
<keyword id="KW-0254">Endocytosis</keyword>
<keyword id="KW-0325">Glycoprotein</keyword>
<keyword id="KW-0407">Ion channel</keyword>
<keyword id="KW-0406">Ion transport</keyword>
<keyword id="KW-1071">Ligand-gated ion channel</keyword>
<keyword id="KW-0472">Membrane</keyword>
<keyword id="KW-0675">Receptor</keyword>
<keyword id="KW-1185">Reference proteome</keyword>
<keyword id="KW-0732">Signal</keyword>
<keyword id="KW-0812">Transmembrane</keyword>
<keyword id="KW-1133">Transmembrane helix</keyword>
<keyword id="KW-0813">Transport</keyword>
<reference key="1">
    <citation type="journal article" date="2005" name="Curr. Biol.">
        <title>Endocytosis function of a ligand-gated ion channel homolog in Caenorhabditis elegans.</title>
        <authorList>
            <person name="Patton A."/>
            <person name="Knuth S."/>
            <person name="Schaheen B."/>
            <person name="Dang H."/>
            <person name="Greenwald I."/>
            <person name="Fares H."/>
        </authorList>
    </citation>
    <scope>NUCLEOTIDE SEQUENCE [MRNA]</scope>
    <scope>FUNCTION</scope>
    <scope>SUBCELLULAR LOCATION</scope>
    <scope>TISSUE SPECIFICITY</scope>
    <scope>MUTAGENESIS OF VAL-272</scope>
</reference>
<reference key="2">
    <citation type="journal article" date="1994" name="Nature">
        <title>2.2 Mb of contiguous nucleotide sequence from chromosome III of C. elegans.</title>
        <authorList>
            <person name="Wilson R."/>
            <person name="Ainscough R."/>
            <person name="Anderson K."/>
            <person name="Baynes C."/>
            <person name="Berks M."/>
            <person name="Bonfield J."/>
            <person name="Burton J."/>
            <person name="Connell M."/>
            <person name="Copsey T."/>
            <person name="Cooper J."/>
            <person name="Coulson A."/>
            <person name="Craxton M."/>
            <person name="Dear S."/>
            <person name="Du Z."/>
            <person name="Durbin R."/>
            <person name="Favello A."/>
            <person name="Fraser A."/>
            <person name="Fulton L."/>
            <person name="Gardner A."/>
            <person name="Green P."/>
            <person name="Hawkins T."/>
            <person name="Hillier L."/>
            <person name="Jier M."/>
            <person name="Johnston L."/>
            <person name="Jones M."/>
            <person name="Kershaw J."/>
            <person name="Kirsten J."/>
            <person name="Laisster N."/>
            <person name="Latreille P."/>
            <person name="Lightning J."/>
            <person name="Lloyd C."/>
            <person name="Mortimore B."/>
            <person name="O'Callaghan M."/>
            <person name="Parsons J."/>
            <person name="Percy C."/>
            <person name="Rifken L."/>
            <person name="Roopra A."/>
            <person name="Saunders D."/>
            <person name="Shownkeen R."/>
            <person name="Sims M."/>
            <person name="Smaldon N."/>
            <person name="Smith A."/>
            <person name="Smith M."/>
            <person name="Sonnhammer E."/>
            <person name="Staden R."/>
            <person name="Sulston J."/>
            <person name="Thierry-Mieg J."/>
            <person name="Thomas K."/>
            <person name="Vaudin M."/>
            <person name="Vaughan K."/>
            <person name="Waterston R."/>
            <person name="Watson A."/>
            <person name="Weinstock L."/>
            <person name="Wilkinson-Sproat J."/>
            <person name="Wohldman P."/>
        </authorList>
    </citation>
    <scope>NUCLEOTIDE SEQUENCE [LARGE SCALE GENOMIC DNA]</scope>
    <source>
        <strain>Bristol N2</strain>
    </source>
</reference>
<reference key="3">
    <citation type="journal article" date="1998" name="Science">
        <title>Genome sequence of the nematode C. elegans: a platform for investigating biology.</title>
        <authorList>
            <consortium name="The C. elegans sequencing consortium"/>
        </authorList>
    </citation>
    <scope>NUCLEOTIDE SEQUENCE [LARGE SCALE GENOMIC DNA]</scope>
    <source>
        <strain>Bristol N2</strain>
    </source>
</reference>
<reference key="4">
    <citation type="journal article" date="2001" name="Genetics">
        <title>Genetic analysis of endocytosis in Caenorhabditis elegans: coelomocyte uptake defective mutants.</title>
        <authorList>
            <person name="Fares H."/>
            <person name="Greenwald I."/>
        </authorList>
    </citation>
    <scope>FUNCTION</scope>
    <scope>DISRUPTION PHENOTYPE</scope>
</reference>
<organism>
    <name type="scientific">Caenorhabditis elegans</name>
    <dbReference type="NCBI Taxonomy" id="6239"/>
    <lineage>
        <taxon>Eukaryota</taxon>
        <taxon>Metazoa</taxon>
        <taxon>Ecdysozoa</taxon>
        <taxon>Nematoda</taxon>
        <taxon>Chromadorea</taxon>
        <taxon>Rhabditida</taxon>
        <taxon>Rhabditina</taxon>
        <taxon>Rhabditomorpha</taxon>
        <taxon>Rhabditoidea</taxon>
        <taxon>Rhabditidae</taxon>
        <taxon>Peloderinae</taxon>
        <taxon>Caenorhabditis</taxon>
    </lineage>
</organism>
<feature type="signal peptide" evidence="2">
    <location>
        <begin position="1"/>
        <end position="24"/>
    </location>
</feature>
<feature type="chain" id="PRO_0000000404" description="Acetylcholine receptor-like protein cup-4">
    <location>
        <begin position="25"/>
        <end position="433"/>
    </location>
</feature>
<feature type="transmembrane region" description="Helical" evidence="2">
    <location>
        <begin position="282"/>
        <end position="302"/>
    </location>
</feature>
<feature type="transmembrane region" description="Helical" evidence="2">
    <location>
        <begin position="307"/>
        <end position="327"/>
    </location>
</feature>
<feature type="transmembrane region" description="Helical" evidence="2">
    <location>
        <begin position="337"/>
        <end position="357"/>
    </location>
</feature>
<feature type="transmembrane region" description="Helical" evidence="2">
    <location>
        <begin position="413"/>
        <end position="433"/>
    </location>
</feature>
<feature type="glycosylation site" description="N-linked (GlcNAc...) asparagine" evidence="2">
    <location>
        <position position="41"/>
    </location>
</feature>
<feature type="glycosylation site" description="N-linked (GlcNAc...) asparagine" evidence="2">
    <location>
        <position position="68"/>
    </location>
</feature>
<feature type="glycosylation site" description="N-linked (GlcNAc...) asparagine" evidence="2">
    <location>
        <position position="237"/>
    </location>
</feature>
<feature type="glycosylation site" description="N-linked (GlcNAc...) asparagine" evidence="2">
    <location>
        <position position="249"/>
    </location>
</feature>
<feature type="disulfide bond" evidence="1">
    <location>
        <begin position="178"/>
        <end position="192"/>
    </location>
</feature>
<feature type="mutagenesis site" description="In ar494; coelomocyte endocytosis defect." evidence="4">
    <original>V</original>
    <variation>D</variation>
    <location>
        <position position="272"/>
    </location>
</feature>
<dbReference type="EMBL" id="AY611497">
    <property type="protein sequence ID" value="AAT42012.1"/>
    <property type="molecule type" value="mRNA"/>
</dbReference>
<dbReference type="EMBL" id="FO080276">
    <property type="protein sequence ID" value="CCD62529.1"/>
    <property type="molecule type" value="Genomic_DNA"/>
</dbReference>
<dbReference type="PIR" id="S44741">
    <property type="entry name" value="S44741"/>
</dbReference>
<dbReference type="RefSeq" id="NP_498710.2">
    <property type="nucleotide sequence ID" value="NM_066309.5"/>
</dbReference>
<dbReference type="SMR" id="P34271"/>
<dbReference type="FunCoup" id="P34271">
    <property type="interactions" value="61"/>
</dbReference>
<dbReference type="STRING" id="6239.C02C2.3.1"/>
<dbReference type="GlyCosmos" id="P34271">
    <property type="glycosylation" value="4 sites, No reported glycans"/>
</dbReference>
<dbReference type="PaxDb" id="6239-C02C2.3"/>
<dbReference type="PeptideAtlas" id="P34271"/>
<dbReference type="EnsemblMetazoa" id="C02C2.3.1">
    <property type="protein sequence ID" value="C02C2.3.1"/>
    <property type="gene ID" value="WBGene00000845"/>
</dbReference>
<dbReference type="GeneID" id="176104"/>
<dbReference type="KEGG" id="cel:CELE_C02C2.3"/>
<dbReference type="UCSC" id="C02C2.3">
    <property type="organism name" value="c. elegans"/>
</dbReference>
<dbReference type="AGR" id="WB:WBGene00000845"/>
<dbReference type="CTD" id="176104"/>
<dbReference type="WormBase" id="C02C2.3">
    <property type="protein sequence ID" value="CE30416"/>
    <property type="gene ID" value="WBGene00000845"/>
    <property type="gene designation" value="cup-4"/>
</dbReference>
<dbReference type="eggNOG" id="KOG3645">
    <property type="taxonomic scope" value="Eukaryota"/>
</dbReference>
<dbReference type="HOGENOM" id="CLU_633456_0_0_1"/>
<dbReference type="InParanoid" id="P34271"/>
<dbReference type="OMA" id="ARVKKWQ"/>
<dbReference type="OrthoDB" id="5975154at2759"/>
<dbReference type="PhylomeDB" id="P34271"/>
<dbReference type="PRO" id="PR:P34271"/>
<dbReference type="Proteomes" id="UP000001940">
    <property type="component" value="Chromosome III"/>
</dbReference>
<dbReference type="Bgee" id="WBGene00000845">
    <property type="expression patterns" value="Expressed in larva and 3 other cell types or tissues"/>
</dbReference>
<dbReference type="GO" id="GO:0031410">
    <property type="term" value="C:cytoplasmic vesicle"/>
    <property type="evidence" value="ECO:0000314"/>
    <property type="project" value="WormBase"/>
</dbReference>
<dbReference type="GO" id="GO:0030659">
    <property type="term" value="C:cytoplasmic vesicle membrane"/>
    <property type="evidence" value="ECO:0000314"/>
    <property type="project" value="UniProtKB"/>
</dbReference>
<dbReference type="GO" id="GO:0043005">
    <property type="term" value="C:neuron projection"/>
    <property type="evidence" value="ECO:0000318"/>
    <property type="project" value="GO_Central"/>
</dbReference>
<dbReference type="GO" id="GO:0005886">
    <property type="term" value="C:plasma membrane"/>
    <property type="evidence" value="ECO:0000318"/>
    <property type="project" value="GO_Central"/>
</dbReference>
<dbReference type="GO" id="GO:0098794">
    <property type="term" value="C:postsynapse"/>
    <property type="evidence" value="ECO:0007669"/>
    <property type="project" value="GOC"/>
</dbReference>
<dbReference type="GO" id="GO:0045202">
    <property type="term" value="C:synapse"/>
    <property type="evidence" value="ECO:0000318"/>
    <property type="project" value="GO_Central"/>
</dbReference>
<dbReference type="GO" id="GO:1902495">
    <property type="term" value="C:transmembrane transporter complex"/>
    <property type="evidence" value="ECO:0000318"/>
    <property type="project" value="GO_Central"/>
</dbReference>
<dbReference type="GO" id="GO:0015464">
    <property type="term" value="F:acetylcholine receptor activity"/>
    <property type="evidence" value="ECO:0000303"/>
    <property type="project" value="UniProtKB"/>
</dbReference>
<dbReference type="GO" id="GO:0005231">
    <property type="term" value="F:excitatory extracellular ligand-gated monoatomic ion channel activity"/>
    <property type="evidence" value="ECO:0000318"/>
    <property type="project" value="GO_Central"/>
</dbReference>
<dbReference type="GO" id="GO:0005216">
    <property type="term" value="F:monoatomic ion channel activity"/>
    <property type="evidence" value="ECO:0000304"/>
    <property type="project" value="UniProtKB"/>
</dbReference>
<dbReference type="GO" id="GO:1904315">
    <property type="term" value="F:transmitter-gated monoatomic ion channel activity involved in regulation of postsynaptic membrane potential"/>
    <property type="evidence" value="ECO:0000318"/>
    <property type="project" value="GO_Central"/>
</dbReference>
<dbReference type="GO" id="GO:0007268">
    <property type="term" value="P:chemical synaptic transmission"/>
    <property type="evidence" value="ECO:0000318"/>
    <property type="project" value="GO_Central"/>
</dbReference>
<dbReference type="GO" id="GO:0008340">
    <property type="term" value="P:determination of adult lifespan"/>
    <property type="evidence" value="ECO:0000315"/>
    <property type="project" value="UniProtKB"/>
</dbReference>
<dbReference type="GO" id="GO:0006897">
    <property type="term" value="P:endocytosis"/>
    <property type="evidence" value="ECO:0000315"/>
    <property type="project" value="WormBase"/>
</dbReference>
<dbReference type="GO" id="GO:0034220">
    <property type="term" value="P:monoatomic ion transmembrane transport"/>
    <property type="evidence" value="ECO:0000318"/>
    <property type="project" value="GO_Central"/>
</dbReference>
<dbReference type="GO" id="GO:1901046">
    <property type="term" value="P:positive regulation of egg-laying behavior"/>
    <property type="evidence" value="ECO:0000315"/>
    <property type="project" value="UniProtKB"/>
</dbReference>
<dbReference type="GO" id="GO:0030100">
    <property type="term" value="P:regulation of endocytosis"/>
    <property type="evidence" value="ECO:0000315"/>
    <property type="project" value="UniProtKB"/>
</dbReference>
<dbReference type="GO" id="GO:0042391">
    <property type="term" value="P:regulation of membrane potential"/>
    <property type="evidence" value="ECO:0000318"/>
    <property type="project" value="GO_Central"/>
</dbReference>
<dbReference type="GO" id="GO:0061771">
    <property type="term" value="P:response to caloric restriction"/>
    <property type="evidence" value="ECO:0000314"/>
    <property type="project" value="UniProtKB"/>
</dbReference>
<dbReference type="GO" id="GO:1901562">
    <property type="term" value="P:response to paraquat"/>
    <property type="evidence" value="ECO:0000315"/>
    <property type="project" value="UniProtKB"/>
</dbReference>
<dbReference type="CDD" id="cd18989">
    <property type="entry name" value="LGIC_ECD_cation"/>
    <property type="match status" value="1"/>
</dbReference>
<dbReference type="FunFam" id="2.70.170.10:FF:000057">
    <property type="entry name" value="Ligand-Gated ion Channel"/>
    <property type="match status" value="1"/>
</dbReference>
<dbReference type="Gene3D" id="2.70.170.10">
    <property type="entry name" value="Neurotransmitter-gated ion-channel ligand-binding domain"/>
    <property type="match status" value="1"/>
</dbReference>
<dbReference type="InterPro" id="IPR006202">
    <property type="entry name" value="Neur_chan_lig-bd"/>
</dbReference>
<dbReference type="InterPro" id="IPR036734">
    <property type="entry name" value="Neur_chan_lig-bd_sf"/>
</dbReference>
<dbReference type="InterPro" id="IPR006201">
    <property type="entry name" value="Neur_channel"/>
</dbReference>
<dbReference type="InterPro" id="IPR018000">
    <property type="entry name" value="Neurotransmitter_ion_chnl_CS"/>
</dbReference>
<dbReference type="PANTHER" id="PTHR18945">
    <property type="entry name" value="NEUROTRANSMITTER GATED ION CHANNEL"/>
    <property type="match status" value="1"/>
</dbReference>
<dbReference type="Pfam" id="PF02931">
    <property type="entry name" value="Neur_chan_LBD"/>
    <property type="match status" value="1"/>
</dbReference>
<dbReference type="SUPFAM" id="SSF63712">
    <property type="entry name" value="Nicotinic receptor ligand binding domain-like"/>
    <property type="match status" value="1"/>
</dbReference>
<dbReference type="PROSITE" id="PS00236">
    <property type="entry name" value="NEUROTR_ION_CHANNEL"/>
    <property type="match status" value="1"/>
</dbReference>
<sequence length="433" mass="49771">MKIIIFVCFILIFYLPIQKKHVNSQQQGIDSDDGDAESFFNKSYSEHQSALEQKIFRGYNPKNRPMKNASFPTIVDVHWHIIHVSINQREQTMTVHGHIYMRWFDEFLVWDPKDFNNIQYARVKKWQVWQPKIKVSNSASGLGSAFDFSTSAHVIIQMMGKDRAKVEMYPTFSIKVGCAFDFTDYPYDLNKCAINLFSTSTMADVQLQNLYAIPPTLSFGWEEQKMKRIISDFKIQNVSSSALYYTNGNITSSAPITGFDLGSTWSMLAVTVSFVRHSPLFEAAVVTPCIVVASLISMTFFIDSLSSTFLLMMLHFYVQLIFLHDLVEKLPLSVSEIPFCIKLIGILMYTNGLTLVLHSSLLCGSYYKCPVPQQLNKIFVIEEYIPNTFKEKVQIKKEESNKSWRDLMKLIRPIIGFVLIILLICMFFVCLLL</sequence>